<keyword id="KW-0167">Capsid protein</keyword>
<keyword id="KW-1139">Helical capsid protein</keyword>
<keyword id="KW-1035">Host cytoplasm</keyword>
<keyword id="KW-0597">Phosphoprotein</keyword>
<keyword id="KW-0687">Ribonucleoprotein</keyword>
<keyword id="KW-0694">RNA-binding</keyword>
<keyword id="KW-0766">Superantigen</keyword>
<keyword id="KW-0543">Viral nucleoprotein</keyword>
<keyword id="KW-0946">Virion</keyword>
<reference key="1">
    <citation type="submission" date="2006-08" db="EMBL/GenBank/DDBJ databases">
        <authorList>
            <person name="Zhao Y.J."/>
            <person name="Guo L."/>
            <person name="Huang Y."/>
            <person name="Qian A.D."/>
        </authorList>
    </citation>
    <scope>NUCLEOTIDE SEQUENCE [GENOMIC RNA]</scope>
</reference>
<sequence>MDADKIVFKVNNQVVSLKPEIIVDQYEYKYPAIKDLKKPCITLGKAPDLNKAYKSVLSGMNAAKLDPDDVCSYLAAAMQFFEGTCPEDWTSYGILIARKGDRITPNPLVEIKRTDVEGNWALTGGMELTRDPTVSEHASLVGLLLSLYRLSKISGQNTGNYKTNIADRIEQIFETAPFVKIVEHHTLMTTHKMCANWSTIPNFRFLAGTYDMFFSRIEHLYSAIRVGTVVTAYEDCSGLVSFTGFIKQINLTAREAILYFFHKNFEEEIRRMFEPGQETAVPHSYFIHFRSLGLSGKSPYSSNAVGHVFNLIHFVGCYMGQVRSLNATVIAACAPHEMSVLGGYLGEEFFGKGTFERRFFRDEKELQEYEAAELTKSDVALADDGTVNSDDEDYFSGETRSPEAVYTRIMMNGGRLKRSHIRRYVSVSSNHQARPNSFAEFLNKTYSNDS</sequence>
<gene>
    <name type="primary">N</name>
</gene>
<accession>Q0GBY4</accession>
<feature type="chain" id="PRO_0000295213" description="Nucleoprotein">
    <location>
        <begin position="1"/>
        <end position="450"/>
    </location>
</feature>
<feature type="modified residue" description="Phosphoserine; by host CK2" evidence="1">
    <location>
        <position position="389"/>
    </location>
</feature>
<dbReference type="EMBL" id="DQ875050">
    <property type="protein sequence ID" value="ABI47937.1"/>
    <property type="molecule type" value="Genomic_RNA"/>
</dbReference>
<dbReference type="SMR" id="Q0GBY4"/>
<dbReference type="Proteomes" id="UP000008650">
    <property type="component" value="Genome"/>
</dbReference>
<dbReference type="GO" id="GO:0019029">
    <property type="term" value="C:helical viral capsid"/>
    <property type="evidence" value="ECO:0007669"/>
    <property type="project" value="UniProtKB-KW"/>
</dbReference>
<dbReference type="GO" id="GO:0030430">
    <property type="term" value="C:host cell cytoplasm"/>
    <property type="evidence" value="ECO:0007669"/>
    <property type="project" value="UniProtKB-SubCell"/>
</dbReference>
<dbReference type="GO" id="GO:1990904">
    <property type="term" value="C:ribonucleoprotein complex"/>
    <property type="evidence" value="ECO:0007669"/>
    <property type="project" value="UniProtKB-KW"/>
</dbReference>
<dbReference type="GO" id="GO:0019013">
    <property type="term" value="C:viral nucleocapsid"/>
    <property type="evidence" value="ECO:0007669"/>
    <property type="project" value="UniProtKB-KW"/>
</dbReference>
<dbReference type="GO" id="GO:0003723">
    <property type="term" value="F:RNA binding"/>
    <property type="evidence" value="ECO:0007669"/>
    <property type="project" value="UniProtKB-KW"/>
</dbReference>
<dbReference type="Gene3D" id="1.10.3610.10">
    <property type="entry name" value="Nucleoprotein"/>
    <property type="match status" value="1"/>
</dbReference>
<dbReference type="Gene3D" id="1.10.3570.10">
    <property type="entry name" value="Rhabdovirus nucleocapsid protein like domain"/>
    <property type="match status" value="1"/>
</dbReference>
<dbReference type="InterPro" id="IPR000448">
    <property type="entry name" value="Rhabdo_ncapsid"/>
</dbReference>
<dbReference type="InterPro" id="IPR023331">
    <property type="entry name" value="Rhabdovirus_ncapsid_C"/>
</dbReference>
<dbReference type="InterPro" id="IPR023330">
    <property type="entry name" value="Rhabdovirus_ncapsid_N"/>
</dbReference>
<dbReference type="InterPro" id="IPR035961">
    <property type="entry name" value="Rhabdovirus_nucleoprotein-like"/>
</dbReference>
<dbReference type="Pfam" id="PF00945">
    <property type="entry name" value="Rhabdo_ncap"/>
    <property type="match status" value="1"/>
</dbReference>
<dbReference type="SUPFAM" id="SSF140809">
    <property type="entry name" value="Rhabdovirus nucleoprotein-like"/>
    <property type="match status" value="1"/>
</dbReference>
<name>NCAP_RABVR</name>
<proteinExistence type="inferred from homology"/>
<evidence type="ECO:0000250" key="1"/>
<evidence type="ECO:0000305" key="2"/>
<organism>
    <name type="scientific">Rabies virus (strain China/MRV)</name>
    <name type="common">RABV</name>
    <dbReference type="NCBI Taxonomy" id="445791"/>
    <lineage>
        <taxon>Viruses</taxon>
        <taxon>Riboviria</taxon>
        <taxon>Orthornavirae</taxon>
        <taxon>Negarnaviricota</taxon>
        <taxon>Haploviricotina</taxon>
        <taxon>Monjiviricetes</taxon>
        <taxon>Mononegavirales</taxon>
        <taxon>Rhabdoviridae</taxon>
        <taxon>Alpharhabdovirinae</taxon>
        <taxon>Lyssavirus</taxon>
        <taxon>Lyssavirus rabies</taxon>
    </lineage>
</organism>
<comment type="function">
    <text evidence="1">Encapsidates the genome in a ratio of one protein N per nine ribonucleotides, protecting it from nucleases. If expressed without protein P it binds non-specifically RNA and therefore can bind it's own mRNA. Interaction with protein P abolishes any non-specific RNA binding, and prevents phosphorylation. The soluble N-P complex encapsidates specifically the genomic RNA, with protein N protecting the genome like a pearl necklace. The encapsidated genomic RNA is termed the nucleocapsid (NC) and serves as template for viral transcription and replication. Protein N binds protein P in the NC through a different interaction, and can be phosphorylated. Subsequent viral replication is dependent on intracellular concentration of newly synthesized protein N. During replication, encapsidation by protein N is coupled to RNA synthesis and all replicative products are resistant to nucleases (By similarity).</text>
</comment>
<comment type="subunit">
    <text evidence="1">Homomultimerizes to form the nucleocapsid. Binds to viral genomic RNA. In nucleocapsid, binds protein P and thereby positions the polymerase on the template. Protein P acts as a chaperone on free protein N to prevent it from aggregation before encapsidating genomic RNA (By similarity).</text>
</comment>
<comment type="subcellular location">
    <subcellularLocation>
        <location>Virion</location>
    </subcellularLocation>
    <subcellularLocation>
        <location evidence="1">Host cytoplasm</location>
    </subcellularLocation>
</comment>
<comment type="PTM">
    <text evidence="1">Phosphorylated by host CK2. Unphosphorylated protein N seems to have a better affinity for leader viral promoter encapsidation. Phosphorylation of protein N in ribonucleocapsid may stabilize the interaction with protein P, thereby playing an important role in viral transcription/replication (By similarity).</text>
</comment>
<comment type="miscellaneous">
    <text evidence="1">Displays a superantigen activity in human and mouse, activating mostly V-beta-8 subtypes of T-cell receptor.</text>
</comment>
<comment type="similarity">
    <text evidence="2">Belongs to the lyssavirus nucleocapsid protein family.</text>
</comment>
<organismHost>
    <name type="scientific">Homo sapiens</name>
    <name type="common">Human</name>
    <dbReference type="NCBI Taxonomy" id="9606"/>
</organismHost>
<organismHost>
    <name type="scientific">Mammalia</name>
    <dbReference type="NCBI Taxonomy" id="40674"/>
</organismHost>
<protein>
    <recommendedName>
        <fullName>Nucleoprotein</fullName>
        <shortName>NP</shortName>
    </recommendedName>
    <alternativeName>
        <fullName>Nucleocapsid protein</fullName>
        <shortName>Protein N</shortName>
    </alternativeName>
</protein>